<proteinExistence type="evidence at transcript level"/>
<organism>
    <name type="scientific">Ethmostigmus rubripes</name>
    <name type="common">Giant centipede</name>
    <dbReference type="NCBI Taxonomy" id="62613"/>
    <lineage>
        <taxon>Eukaryota</taxon>
        <taxon>Metazoa</taxon>
        <taxon>Ecdysozoa</taxon>
        <taxon>Arthropoda</taxon>
        <taxon>Myriapoda</taxon>
        <taxon>Chilopoda</taxon>
        <taxon>Pleurostigmophora</taxon>
        <taxon>Scolopendromorpha</taxon>
        <taxon>Scolopendridae</taxon>
        <taxon>Ethmostigmus</taxon>
    </lineage>
</organism>
<name>TXG2A_ETHRU</name>
<accession>P0DQC5</accession>
<comment type="subcellular location">
    <subcellularLocation>
        <location evidence="4">Secreted</location>
    </subcellularLocation>
</comment>
<comment type="tissue specificity">
    <text evidence="4">Expressed by the venom gland.</text>
</comment>
<comment type="PTM">
    <text evidence="3">Contains 4 disulfide bonds.</text>
</comment>
<comment type="similarity">
    <text evidence="3">Belongs to the scoloptoxin-16 family.</text>
</comment>
<comment type="caution">
    <text evidence="4">All E.rubripes family members described in 'Undeheim et al., 2014' have not been imported into UniProtKB. Please, refer to this paper to access them.</text>
</comment>
<comment type="online information" name="National Center for Biotechnology Information (NCBI)">
    <link uri="https://www.ncbi.nlm.nih.gov/nuccore/GASI01000135"/>
</comment>
<reference key="1">
    <citation type="journal article" date="2014" name="Mol. Biol. Evol.">
        <title>Clawing through evolution: toxin diversification and convergence in the ancient lineage Chilopoda (centipedes).</title>
        <authorList>
            <person name="Undheim E.A."/>
            <person name="Jones A."/>
            <person name="Clauser K.R."/>
            <person name="Holland J.W."/>
            <person name="Pineda S.S."/>
            <person name="King G.F."/>
            <person name="Fry B.G."/>
        </authorList>
    </citation>
    <scope>NUCLEOTIDE SEQUENCE [MRNA]</scope>
    <scope>NOMENCLATURE</scope>
    <source>
        <tissue>Venom gland</tissue>
    </source>
</reference>
<dbReference type="GO" id="GO:0005576">
    <property type="term" value="C:extracellular region"/>
    <property type="evidence" value="ECO:0007669"/>
    <property type="project" value="UniProtKB-SubCell"/>
</dbReference>
<dbReference type="GO" id="GO:0090729">
    <property type="term" value="F:toxin activity"/>
    <property type="evidence" value="ECO:0007669"/>
    <property type="project" value="UniProtKB-KW"/>
</dbReference>
<dbReference type="InterPro" id="IPR029277">
    <property type="entry name" value="SVWC_dom"/>
</dbReference>
<dbReference type="Pfam" id="PF15430">
    <property type="entry name" value="SVWC"/>
    <property type="match status" value="1"/>
</dbReference>
<keyword id="KW-1015">Disulfide bond</keyword>
<keyword id="KW-0964">Secreted</keyword>
<keyword id="KW-0732">Signal</keyword>
<keyword id="KW-0800">Toxin</keyword>
<sequence length="120" mass="13212">MNTVSVVQFLAVGCAVFVLYGRGVFAAEGVKKAGQHKDAELCLGSDGLGHRLDEFWYNDDMCQRFLCFKDDEGIMYEQIANCPIAIAEGDCTLKPGTKGHYPDCCPAVECPPEDQKEEEI</sequence>
<evidence type="ECO:0000255" key="1"/>
<evidence type="ECO:0000303" key="2">
    <source>
    </source>
</evidence>
<evidence type="ECO:0000305" key="3"/>
<evidence type="ECO:0000305" key="4">
    <source>
    </source>
</evidence>
<feature type="signal peptide" evidence="1">
    <location>
        <begin position="1"/>
        <end position="26"/>
    </location>
</feature>
<feature type="chain" id="PRO_0000446806" description="U-scoloptoxin(16)-Er2a" evidence="3">
    <location>
        <begin position="27"/>
        <end position="120"/>
    </location>
</feature>
<protein>
    <recommendedName>
        <fullName evidence="2">U-scoloptoxin(16)-Er2a</fullName>
        <shortName evidence="2">U-SLPTX(16)-Er2a</shortName>
    </recommendedName>
</protein>